<geneLocation type="chloroplast"/>
<protein>
    <recommendedName>
        <fullName evidence="1">Photosystem II reaction center protein L</fullName>
        <shortName evidence="1">PSII-L</shortName>
    </recommendedName>
</protein>
<dbReference type="EMBL" id="X04465">
    <property type="protein sequence ID" value="CAA28099.1"/>
    <property type="molecule type" value="Genomic_DNA"/>
</dbReference>
<dbReference type="PIR" id="A05048">
    <property type="entry name" value="A05048"/>
</dbReference>
<dbReference type="RefSeq" id="NP_039313.1">
    <property type="nucleotide sequence ID" value="NC_001319.1"/>
</dbReference>
<dbReference type="RefSeq" id="YP_009646828.1">
    <property type="nucleotide sequence ID" value="NC_042505.1"/>
</dbReference>
<dbReference type="SMR" id="P60151"/>
<dbReference type="GeneID" id="2702601"/>
<dbReference type="GeneID" id="40386745"/>
<dbReference type="GO" id="GO:0009535">
    <property type="term" value="C:chloroplast thylakoid membrane"/>
    <property type="evidence" value="ECO:0007669"/>
    <property type="project" value="UniProtKB-SubCell"/>
</dbReference>
<dbReference type="GO" id="GO:0009539">
    <property type="term" value="C:photosystem II reaction center"/>
    <property type="evidence" value="ECO:0007669"/>
    <property type="project" value="InterPro"/>
</dbReference>
<dbReference type="GO" id="GO:0015979">
    <property type="term" value="P:photosynthesis"/>
    <property type="evidence" value="ECO:0007669"/>
    <property type="project" value="UniProtKB-UniRule"/>
</dbReference>
<dbReference type="HAMAP" id="MF_01317">
    <property type="entry name" value="PSII_PsbL"/>
    <property type="match status" value="1"/>
</dbReference>
<dbReference type="InterPro" id="IPR003372">
    <property type="entry name" value="PSII_PsbL"/>
</dbReference>
<dbReference type="InterPro" id="IPR037266">
    <property type="entry name" value="PSII_PsbL_sf"/>
</dbReference>
<dbReference type="NCBIfam" id="NF001972">
    <property type="entry name" value="PRK00753.1"/>
    <property type="match status" value="1"/>
</dbReference>
<dbReference type="Pfam" id="PF02419">
    <property type="entry name" value="PsbL"/>
    <property type="match status" value="1"/>
</dbReference>
<dbReference type="SUPFAM" id="SSF161017">
    <property type="entry name" value="Photosystem II reaction center protein L, PsbL"/>
    <property type="match status" value="1"/>
</dbReference>
<evidence type="ECO:0000255" key="1">
    <source>
        <dbReference type="HAMAP-Rule" id="MF_01317"/>
    </source>
</evidence>
<keyword id="KW-0150">Chloroplast</keyword>
<keyword id="KW-0472">Membrane</keyword>
<keyword id="KW-0602">Photosynthesis</keyword>
<keyword id="KW-0604">Photosystem II</keyword>
<keyword id="KW-0934">Plastid</keyword>
<keyword id="KW-0674">Reaction center</keyword>
<keyword id="KW-0793">Thylakoid</keyword>
<keyword id="KW-0812">Transmembrane</keyword>
<keyword id="KW-1133">Transmembrane helix</keyword>
<feature type="chain" id="PRO_0000219740" description="Photosystem II reaction center protein L">
    <location>
        <begin position="1"/>
        <end position="38"/>
    </location>
</feature>
<feature type="transmembrane region" description="Helical" evidence="1">
    <location>
        <begin position="17"/>
        <end position="37"/>
    </location>
</feature>
<proteinExistence type="inferred from homology"/>
<name>PSBL_MARPO</name>
<sequence length="38" mass="4479">MTQPNPNKQSVELNRTSLYWGLLLIFVLAVLFSNYFFN</sequence>
<reference key="1">
    <citation type="journal article" date="1988" name="J. Mol. Biol.">
        <title>Structure and organization of Marchantia polymorpha chloroplast genome. III. Gene organization of the large single copy region from rbcL to trnI(CAU).</title>
        <authorList>
            <person name="Fukuzawa H."/>
            <person name="Kohchi T."/>
            <person name="Sano T."/>
            <person name="Shirai H."/>
            <person name="Umesono K."/>
            <person name="Inokuchi H."/>
            <person name="Ozeki H."/>
            <person name="Ohyama K."/>
        </authorList>
    </citation>
    <scope>NUCLEOTIDE SEQUENCE [GENOMIC DNA]</scope>
</reference>
<reference key="2">
    <citation type="journal article" date="1986" name="Nature">
        <title>Chloroplast gene organization deduced from complete sequence of liverwort Marchantia polymorpha chloroplast DNA.</title>
        <authorList>
            <person name="Ohyama K."/>
            <person name="Fukuzawa H."/>
            <person name="Kohchi T."/>
            <person name="Shirai H."/>
            <person name="Sano T."/>
            <person name="Sano S."/>
            <person name="Umesono K."/>
            <person name="Shiki Y."/>
            <person name="Takeuchi M."/>
            <person name="Chang Z."/>
            <person name="Aota S."/>
            <person name="Inokuchi H."/>
            <person name="Ozeki H."/>
        </authorList>
    </citation>
    <scope>NUCLEOTIDE SEQUENCE [LARGE SCALE GENOMIC DNA]</scope>
</reference>
<accession>P60151</accession>
<accession>P12165</accession>
<comment type="function">
    <text evidence="1">One of the components of the core complex of photosystem II (PSII). PSII is a light-driven water:plastoquinone oxidoreductase that uses light energy to abstract electrons from H(2)O, generating O(2) and a proton gradient subsequently used for ATP formation. It consists of a core antenna complex that captures photons, and an electron transfer chain that converts photonic excitation into a charge separation. This subunit is found at the monomer-monomer interface and is required for correct PSII assembly and/or dimerization.</text>
</comment>
<comment type="subunit">
    <text evidence="1">PSII is composed of 1 copy each of membrane proteins PsbA, PsbB, PsbC, PsbD, PsbE, PsbF, PsbH, PsbI, PsbJ, PsbK, PsbL, PsbM, PsbT, PsbX, PsbY, PsbZ, Psb30/Ycf12, at least 3 peripheral proteins of the oxygen-evolving complex and a large number of cofactors. It forms dimeric complexes.</text>
</comment>
<comment type="subcellular location">
    <subcellularLocation>
        <location evidence="1">Plastid</location>
        <location evidence="1">Chloroplast thylakoid membrane</location>
        <topology evidence="1">Single-pass membrane protein</topology>
    </subcellularLocation>
</comment>
<comment type="similarity">
    <text evidence="1">Belongs to the PsbL family.</text>
</comment>
<organism>
    <name type="scientific">Marchantia polymorpha</name>
    <name type="common">Common liverwort</name>
    <name type="synonym">Marchantia aquatica</name>
    <dbReference type="NCBI Taxonomy" id="3197"/>
    <lineage>
        <taxon>Eukaryota</taxon>
        <taxon>Viridiplantae</taxon>
        <taxon>Streptophyta</taxon>
        <taxon>Embryophyta</taxon>
        <taxon>Marchantiophyta</taxon>
        <taxon>Marchantiopsida</taxon>
        <taxon>Marchantiidae</taxon>
        <taxon>Marchantiales</taxon>
        <taxon>Marchantiaceae</taxon>
        <taxon>Marchantia</taxon>
    </lineage>
</organism>
<gene>
    <name evidence="1" type="primary">psbL</name>
</gene>